<gene>
    <name type="primary">MST27</name>
    <name type="synonym">DUP2</name>
    <name type="ordered locus">YGL051W</name>
</gene>
<reference key="1">
    <citation type="journal article" date="1997" name="Yeast">
        <title>The characterization of two new clusters of duplicated genes suggests a 'Lego' organization of the yeast Saccharomyces cerevisiae chromosomes.</title>
        <authorList>
            <person name="Feuermann M."/>
            <person name="de Montigny J."/>
            <person name="Potier S."/>
            <person name="Souciet J.-L."/>
        </authorList>
    </citation>
    <scope>NUCLEOTIDE SEQUENCE [GENOMIC DNA]</scope>
    <source>
        <strain>ATCC 204508 / S288c</strain>
    </source>
</reference>
<reference key="2">
    <citation type="journal article" date="1997" name="Nature">
        <title>The nucleotide sequence of Saccharomyces cerevisiae chromosome VII.</title>
        <authorList>
            <person name="Tettelin H."/>
            <person name="Agostoni-Carbone M.L."/>
            <person name="Albermann K."/>
            <person name="Albers M."/>
            <person name="Arroyo J."/>
            <person name="Backes U."/>
            <person name="Barreiros T."/>
            <person name="Bertani I."/>
            <person name="Bjourson A.J."/>
            <person name="Brueckner M."/>
            <person name="Bruschi C.V."/>
            <person name="Carignani G."/>
            <person name="Castagnoli L."/>
            <person name="Cerdan E."/>
            <person name="Clemente M.L."/>
            <person name="Coblenz A."/>
            <person name="Coglievina M."/>
            <person name="Coissac E."/>
            <person name="Defoor E."/>
            <person name="Del Bino S."/>
            <person name="Delius H."/>
            <person name="Delneri D."/>
            <person name="de Wergifosse P."/>
            <person name="Dujon B."/>
            <person name="Durand P."/>
            <person name="Entian K.-D."/>
            <person name="Eraso P."/>
            <person name="Escribano V."/>
            <person name="Fabiani L."/>
            <person name="Fartmann B."/>
            <person name="Feroli F."/>
            <person name="Feuermann M."/>
            <person name="Frontali L."/>
            <person name="Garcia-Gonzalez M."/>
            <person name="Garcia-Saez M.I."/>
            <person name="Goffeau A."/>
            <person name="Guerreiro P."/>
            <person name="Hani J."/>
            <person name="Hansen M."/>
            <person name="Hebling U."/>
            <person name="Hernandez K."/>
            <person name="Heumann K."/>
            <person name="Hilger F."/>
            <person name="Hofmann B."/>
            <person name="Indge K.J."/>
            <person name="James C.M."/>
            <person name="Klima R."/>
            <person name="Koetter P."/>
            <person name="Kramer B."/>
            <person name="Kramer W."/>
            <person name="Lauquin G."/>
            <person name="Leuther H."/>
            <person name="Louis E.J."/>
            <person name="Maillier E."/>
            <person name="Marconi A."/>
            <person name="Martegani E."/>
            <person name="Mazon M.J."/>
            <person name="Mazzoni C."/>
            <person name="McReynolds A.D.K."/>
            <person name="Melchioretto P."/>
            <person name="Mewes H.-W."/>
            <person name="Minenkova O."/>
            <person name="Mueller-Auer S."/>
            <person name="Nawrocki A."/>
            <person name="Netter P."/>
            <person name="Neu R."/>
            <person name="Nombela C."/>
            <person name="Oliver S.G."/>
            <person name="Panzeri L."/>
            <person name="Paoluzi S."/>
            <person name="Plevani P."/>
            <person name="Portetelle D."/>
            <person name="Portillo F."/>
            <person name="Potier S."/>
            <person name="Purnelle B."/>
            <person name="Rieger M."/>
            <person name="Riles L."/>
            <person name="Rinaldi T."/>
            <person name="Robben J."/>
            <person name="Rodrigues-Pousada C."/>
            <person name="Rodriguez-Belmonte E."/>
            <person name="Rodriguez-Torres A.M."/>
            <person name="Rose M."/>
            <person name="Ruzzi M."/>
            <person name="Saliola M."/>
            <person name="Sanchez-Perez M."/>
            <person name="Schaefer B."/>
            <person name="Schaefer M."/>
            <person name="Scharfe M."/>
            <person name="Schmidheini T."/>
            <person name="Schreer A."/>
            <person name="Skala J."/>
            <person name="Souciet J.-L."/>
            <person name="Steensma H.Y."/>
            <person name="Talla E."/>
            <person name="Thierry A."/>
            <person name="Vandenbol M."/>
            <person name="van der Aart Q.J.M."/>
            <person name="Van Dyck L."/>
            <person name="Vanoni M."/>
            <person name="Verhasselt P."/>
            <person name="Voet M."/>
            <person name="Volckaert G."/>
            <person name="Wambutt R."/>
            <person name="Watson M.D."/>
            <person name="Weber N."/>
            <person name="Wedler E."/>
            <person name="Wedler H."/>
            <person name="Wipfli P."/>
            <person name="Wolf K."/>
            <person name="Wright L.F."/>
            <person name="Zaccaria P."/>
            <person name="Zimmermann M."/>
            <person name="Zollner A."/>
            <person name="Kleine K."/>
        </authorList>
    </citation>
    <scope>NUCLEOTIDE SEQUENCE [LARGE SCALE GENOMIC DNA]</scope>
    <source>
        <strain>ATCC 204508 / S288c</strain>
    </source>
</reference>
<reference key="3">
    <citation type="journal article" date="2014" name="G3 (Bethesda)">
        <title>The reference genome sequence of Saccharomyces cerevisiae: Then and now.</title>
        <authorList>
            <person name="Engel S.R."/>
            <person name="Dietrich F.S."/>
            <person name="Fisk D.G."/>
            <person name="Binkley G."/>
            <person name="Balakrishnan R."/>
            <person name="Costanzo M.C."/>
            <person name="Dwight S.S."/>
            <person name="Hitz B.C."/>
            <person name="Karra K."/>
            <person name="Nash R.S."/>
            <person name="Weng S."/>
            <person name="Wong E.D."/>
            <person name="Lloyd P."/>
            <person name="Skrzypek M.S."/>
            <person name="Miyasato S.R."/>
            <person name="Simison M."/>
            <person name="Cherry J.M."/>
        </authorList>
    </citation>
    <scope>GENOME REANNOTATION</scope>
    <source>
        <strain>ATCC 204508 / S288c</strain>
    </source>
</reference>
<reference key="4">
    <citation type="journal article" date="2002" name="Microbiology">
        <title>Functional analysis of the Saccharomyces cerevisiae DUP240 multigene family reveals membrane-associated proteins that are not essential for cell viability.</title>
        <authorList>
            <person name="Poirey R."/>
            <person name="Despons L."/>
            <person name="Leh V."/>
            <person name="Lafuente M.-J."/>
            <person name="Potier S."/>
            <person name="Souciet J.-L."/>
            <person name="Jauniaux J.-C."/>
        </authorList>
    </citation>
    <scope>SUBCELLULAR LOCATION</scope>
</reference>
<reference key="5">
    <citation type="journal article" date="2003" name="Mol. Biol. Cell">
        <title>Suppression of coatomer mutants by a new protein family with COPI and COPII binding motifs in Saccharomyces cerevisiae.</title>
        <authorList>
            <person name="Sandmann T."/>
            <person name="Herrmann J.M."/>
            <person name="Dengjel J."/>
            <person name="Schwarz H."/>
            <person name="Spang A."/>
        </authorList>
    </citation>
    <scope>FUNCTION</scope>
    <scope>SUBCELLULAR LOCATION</scope>
    <scope>MUTAGENESIS OF 231-LYS-LYS-232</scope>
    <scope>INTERACTION WITH MST28</scope>
</reference>
<reference key="6">
    <citation type="journal article" date="2006" name="Proc. Natl. Acad. Sci. U.S.A.">
        <title>A global topology map of the Saccharomyces cerevisiae membrane proteome.</title>
        <authorList>
            <person name="Kim H."/>
            <person name="Melen K."/>
            <person name="Oesterberg M."/>
            <person name="von Heijne G."/>
        </authorList>
    </citation>
    <scope>TOPOLOGY [LARGE SCALE ANALYSIS]</scope>
    <source>
        <strain>ATCC 208353 / W303-1A</strain>
    </source>
</reference>
<feature type="chain" id="PRO_0000207525" description="Multicopy suppressor of SEC21 protein 27">
    <location>
        <begin position="1"/>
        <end position="234"/>
    </location>
</feature>
<feature type="topological domain" description="Cytoplasmic" evidence="2">
    <location>
        <begin position="1"/>
        <end position="47"/>
    </location>
</feature>
<feature type="transmembrane region" description="Helical" evidence="2">
    <location>
        <begin position="48"/>
        <end position="68"/>
    </location>
</feature>
<feature type="topological domain" description="Extracellular" evidence="2">
    <location>
        <begin position="69"/>
        <end position="72"/>
    </location>
</feature>
<feature type="transmembrane region" description="Helical" evidence="2">
    <location>
        <begin position="73"/>
        <end position="93"/>
    </location>
</feature>
<feature type="topological domain" description="Cytoplasmic" evidence="2">
    <location>
        <begin position="94"/>
        <end position="234"/>
    </location>
</feature>
<feature type="region of interest" description="COPI binding">
    <location>
        <begin position="231"/>
        <end position="234"/>
    </location>
</feature>
<feature type="modified residue" description="Phosphothreonine" evidence="1">
    <location>
        <position position="3"/>
    </location>
</feature>
<feature type="mutagenesis site" description="Abolishes binding to COPI coatomer complex." evidence="4">
    <original>KK</original>
    <variation>AA</variation>
    <location>
        <begin position="231"/>
        <end position="232"/>
    </location>
</feature>
<evidence type="ECO:0000250" key="1">
    <source>
        <dbReference type="UniProtKB" id="P39552"/>
    </source>
</evidence>
<evidence type="ECO:0000255" key="2"/>
<evidence type="ECO:0000269" key="3">
    <source>
    </source>
</evidence>
<evidence type="ECO:0000269" key="4">
    <source>
    </source>
</evidence>
<evidence type="ECO:0000305" key="5"/>
<name>MST27_YEAST</name>
<organism>
    <name type="scientific">Saccharomyces cerevisiae (strain ATCC 204508 / S288c)</name>
    <name type="common">Baker's yeast</name>
    <dbReference type="NCBI Taxonomy" id="559292"/>
    <lineage>
        <taxon>Eukaryota</taxon>
        <taxon>Fungi</taxon>
        <taxon>Dikarya</taxon>
        <taxon>Ascomycota</taxon>
        <taxon>Saccharomycotina</taxon>
        <taxon>Saccharomycetes</taxon>
        <taxon>Saccharomycetales</taxon>
        <taxon>Saccharomycetaceae</taxon>
        <taxon>Saccharomyces</taxon>
    </lineage>
</organism>
<dbReference type="EMBL" id="Z72574">
    <property type="protein sequence ID" value="CAA96754.1"/>
    <property type="molecule type" value="Genomic_DNA"/>
</dbReference>
<dbReference type="EMBL" id="BK006941">
    <property type="protein sequence ID" value="DAA08050.1"/>
    <property type="molecule type" value="Genomic_DNA"/>
</dbReference>
<dbReference type="PIR" id="S64055">
    <property type="entry name" value="S64055"/>
</dbReference>
<dbReference type="RefSeq" id="NP_011464.1">
    <property type="nucleotide sequence ID" value="NM_001180916.1"/>
</dbReference>
<dbReference type="BioGRID" id="33196">
    <property type="interactions" value="82"/>
</dbReference>
<dbReference type="ComplexPortal" id="CPX-1303">
    <property type="entry name" value="MST27-MST28 vesicle formation complex"/>
</dbReference>
<dbReference type="DIP" id="DIP-1852N"/>
<dbReference type="FunCoup" id="P53176">
    <property type="interactions" value="60"/>
</dbReference>
<dbReference type="IntAct" id="P53176">
    <property type="interactions" value="16"/>
</dbReference>
<dbReference type="MINT" id="P53176"/>
<dbReference type="STRING" id="4932.YGL051W"/>
<dbReference type="iPTMnet" id="P53176"/>
<dbReference type="PaxDb" id="4932-YGL051W"/>
<dbReference type="PeptideAtlas" id="P53176"/>
<dbReference type="EnsemblFungi" id="YGL051W_mRNA">
    <property type="protein sequence ID" value="YGL051W"/>
    <property type="gene ID" value="YGL051W"/>
</dbReference>
<dbReference type="GeneID" id="852830"/>
<dbReference type="KEGG" id="sce:YGL051W"/>
<dbReference type="AGR" id="SGD:S000003019"/>
<dbReference type="SGD" id="S000003019">
    <property type="gene designation" value="MST27"/>
</dbReference>
<dbReference type="VEuPathDB" id="FungiDB:YGL051W"/>
<dbReference type="eggNOG" id="ENOG502SSNW">
    <property type="taxonomic scope" value="Eukaryota"/>
</dbReference>
<dbReference type="GeneTree" id="ENSGT00940000176285"/>
<dbReference type="HOGENOM" id="CLU_081384_0_1_1"/>
<dbReference type="InParanoid" id="P53176"/>
<dbReference type="OMA" id="IRCHRIA"/>
<dbReference type="OrthoDB" id="4061733at2759"/>
<dbReference type="BioCyc" id="YEAST:G3O-30561-MONOMER"/>
<dbReference type="PRO" id="PR:P53176"/>
<dbReference type="Proteomes" id="UP000002311">
    <property type="component" value="Chromosome VII"/>
</dbReference>
<dbReference type="RNAct" id="P53176">
    <property type="molecule type" value="protein"/>
</dbReference>
<dbReference type="GO" id="GO:0030663">
    <property type="term" value="C:COPI-coated vesicle membrane"/>
    <property type="evidence" value="ECO:0000314"/>
    <property type="project" value="ComplexPortal"/>
</dbReference>
<dbReference type="GO" id="GO:0005783">
    <property type="term" value="C:endoplasmic reticulum"/>
    <property type="evidence" value="ECO:0000314"/>
    <property type="project" value="ComplexPortal"/>
</dbReference>
<dbReference type="GO" id="GO:0012507">
    <property type="term" value="C:ER to Golgi transport vesicle membrane"/>
    <property type="evidence" value="ECO:0007669"/>
    <property type="project" value="UniProtKB-SubCell"/>
</dbReference>
<dbReference type="GO" id="GO:0005794">
    <property type="term" value="C:Golgi apparatus"/>
    <property type="evidence" value="ECO:0000314"/>
    <property type="project" value="ComplexPortal"/>
</dbReference>
<dbReference type="GO" id="GO:0016020">
    <property type="term" value="C:membrane"/>
    <property type="evidence" value="ECO:0000314"/>
    <property type="project" value="SGD"/>
</dbReference>
<dbReference type="GO" id="GO:0005886">
    <property type="term" value="C:plasma membrane"/>
    <property type="evidence" value="ECO:0000315"/>
    <property type="project" value="SGD"/>
</dbReference>
<dbReference type="GO" id="GO:0006888">
    <property type="term" value="P:endoplasmic reticulum to Golgi vesicle-mediated transport"/>
    <property type="evidence" value="ECO:0000316"/>
    <property type="project" value="SGD"/>
</dbReference>
<dbReference type="GO" id="GO:0015031">
    <property type="term" value="P:protein transport"/>
    <property type="evidence" value="ECO:0007669"/>
    <property type="project" value="UniProtKB-KW"/>
</dbReference>
<dbReference type="GO" id="GO:0006890">
    <property type="term" value="P:retrograde vesicle-mediated transport, Golgi to endoplasmic reticulum"/>
    <property type="evidence" value="ECO:0000316"/>
    <property type="project" value="SGD"/>
</dbReference>
<dbReference type="GO" id="GO:0016050">
    <property type="term" value="P:vesicle organization"/>
    <property type="evidence" value="ECO:0000314"/>
    <property type="project" value="ComplexPortal"/>
</dbReference>
<dbReference type="InterPro" id="IPR001142">
    <property type="entry name" value="DUP/COS"/>
</dbReference>
<dbReference type="Pfam" id="PF00674">
    <property type="entry name" value="DUP"/>
    <property type="match status" value="1"/>
</dbReference>
<sequence length="234" mass="27241">MQTPLESTDVKLDTLNEPSAHLIEKNVALPKDIFRSYLSYWIYEIARYTPVMILSLVIGVLVLLIIFFNDNEACVFNSAYYAYLSLVVLLIILGDGNPKLVSRRNFRTELLVDVITRKPAVEGKEWRIITYNMNQYLFNHGQWHTPYYFYSDEDCYRYFLRLVEGVTPKKQTATSIGNSPVTAKPEDAIESASPSSRLNYRNFLLKAAEIERQAQENYWRRRHPNIDALLKKTE</sequence>
<comment type="function">
    <text evidence="4">Involved in protein trafficking vesicle formation, probably by stabilizing of coatomer at the Golgi membrane and thus allowing the efficient formation of COPI coated vesicles.</text>
</comment>
<comment type="subunit">
    <text evidence="4">Interacts with MST28. Binds to coatomer proteins of COPI and SEC23/SEC24 of COPII coated vesicles.</text>
</comment>
<comment type="interaction">
    <interactant intactId="EBI-6205">
        <id>P53176</id>
    </interactant>
    <interactant intactId="EBI-20785">
        <id>P39552</id>
        <label>MST28</label>
    </interactant>
    <organismsDiffer>false</organismsDiffer>
    <experiments>4</experiments>
</comment>
<comment type="subcellular location">
    <subcellularLocation>
        <location evidence="3 4">Endoplasmic reticulum</location>
    </subcellularLocation>
    <subcellularLocation>
        <location evidence="4">Golgi apparatus</location>
    </subcellularLocation>
    <subcellularLocation>
        <location evidence="4">Cytoplasmic vesicle</location>
        <location evidence="4">COPI-coated vesicle membrane</location>
        <topology evidence="4">Multi-pass membrane protein</topology>
    </subcellularLocation>
    <subcellularLocation>
        <location evidence="4">Cytoplasmic vesicle</location>
        <location evidence="4">COPII-coated vesicle membrane</location>
        <topology evidence="4">Multi-pass membrane protein</topology>
    </subcellularLocation>
</comment>
<comment type="miscellaneous">
    <text>Members of the DUP240 multigene family are specific to S.cerevisiae sensu strictu. Cells lacking all 10 DUP240 proteins show no obvious alterations in mating, sporulation and cell growth.</text>
</comment>
<comment type="similarity">
    <text evidence="5">Belongs to the DUP/COS family.</text>
</comment>
<keyword id="KW-0968">Cytoplasmic vesicle</keyword>
<keyword id="KW-0256">Endoplasmic reticulum</keyword>
<keyword id="KW-0931">ER-Golgi transport</keyword>
<keyword id="KW-0333">Golgi apparatus</keyword>
<keyword id="KW-0472">Membrane</keyword>
<keyword id="KW-0597">Phosphoprotein</keyword>
<keyword id="KW-0653">Protein transport</keyword>
<keyword id="KW-1185">Reference proteome</keyword>
<keyword id="KW-0812">Transmembrane</keyword>
<keyword id="KW-1133">Transmembrane helix</keyword>
<keyword id="KW-0813">Transport</keyword>
<proteinExistence type="evidence at protein level"/>
<accession>P53176</accession>
<accession>D6VU89</accession>
<protein>
    <recommendedName>
        <fullName>Multicopy suppressor of SEC21 protein 27</fullName>
    </recommendedName>
    <alternativeName>
        <fullName>DUP240 protein MST27</fullName>
        <shortName>Protein DUP2</shortName>
    </alternativeName>
</protein>